<organism>
    <name type="scientific">Rickettsia rickettsii (strain Iowa)</name>
    <dbReference type="NCBI Taxonomy" id="452659"/>
    <lineage>
        <taxon>Bacteria</taxon>
        <taxon>Pseudomonadati</taxon>
        <taxon>Pseudomonadota</taxon>
        <taxon>Alphaproteobacteria</taxon>
        <taxon>Rickettsiales</taxon>
        <taxon>Rickettsiaceae</taxon>
        <taxon>Rickettsieae</taxon>
        <taxon>Rickettsia</taxon>
        <taxon>spotted fever group</taxon>
    </lineage>
</organism>
<evidence type="ECO:0000255" key="1">
    <source>
        <dbReference type="HAMAP-Rule" id="MF_00539"/>
    </source>
</evidence>
<evidence type="ECO:0000256" key="2">
    <source>
        <dbReference type="SAM" id="MobiDB-lite"/>
    </source>
</evidence>
<evidence type="ECO:0000305" key="3"/>
<comment type="similarity">
    <text evidence="1">Belongs to the bacterial ribosomal protein bL27 family.</text>
</comment>
<proteinExistence type="inferred from homology"/>
<name>RL27_RICRO</name>
<protein>
    <recommendedName>
        <fullName evidence="1">Large ribosomal subunit protein bL27</fullName>
    </recommendedName>
    <alternativeName>
        <fullName evidence="3">50S ribosomal protein L27</fullName>
    </alternativeName>
</protein>
<reference key="1">
    <citation type="journal article" date="2008" name="Infect. Immun.">
        <title>Genomic comparison of virulent Rickettsia rickettsii Sheila Smith and avirulent Rickettsia rickettsii Iowa.</title>
        <authorList>
            <person name="Ellison D.W."/>
            <person name="Clark T.R."/>
            <person name="Sturdevant D.E."/>
            <person name="Virtaneva K."/>
            <person name="Porcella S.F."/>
            <person name="Hackstadt T."/>
        </authorList>
    </citation>
    <scope>NUCLEOTIDE SEQUENCE [LARGE SCALE GENOMIC DNA]</scope>
    <source>
        <strain>Iowa</strain>
    </source>
</reference>
<dbReference type="EMBL" id="CP000766">
    <property type="protein sequence ID" value="ABY73104.1"/>
    <property type="molecule type" value="Genomic_DNA"/>
</dbReference>
<dbReference type="RefSeq" id="WP_012151280.1">
    <property type="nucleotide sequence ID" value="NC_010263.3"/>
</dbReference>
<dbReference type="SMR" id="B0BV44"/>
<dbReference type="GeneID" id="79937785"/>
<dbReference type="KEGG" id="rrj:RrIowa_1370"/>
<dbReference type="eggNOG" id="COG0211">
    <property type="taxonomic scope" value="Bacteria"/>
</dbReference>
<dbReference type="HOGENOM" id="CLU_095424_4_1_5"/>
<dbReference type="Proteomes" id="UP000000796">
    <property type="component" value="Chromosome"/>
</dbReference>
<dbReference type="GO" id="GO:1990904">
    <property type="term" value="C:ribonucleoprotein complex"/>
    <property type="evidence" value="ECO:0007669"/>
    <property type="project" value="UniProtKB-KW"/>
</dbReference>
<dbReference type="GO" id="GO:0005840">
    <property type="term" value="C:ribosome"/>
    <property type="evidence" value="ECO:0007669"/>
    <property type="project" value="UniProtKB-KW"/>
</dbReference>
<dbReference type="GO" id="GO:0003735">
    <property type="term" value="F:structural constituent of ribosome"/>
    <property type="evidence" value="ECO:0007669"/>
    <property type="project" value="InterPro"/>
</dbReference>
<dbReference type="GO" id="GO:0006412">
    <property type="term" value="P:translation"/>
    <property type="evidence" value="ECO:0007669"/>
    <property type="project" value="UniProtKB-UniRule"/>
</dbReference>
<dbReference type="FunFam" id="2.40.50.100:FF:000020">
    <property type="entry name" value="50S ribosomal protein L27"/>
    <property type="match status" value="1"/>
</dbReference>
<dbReference type="Gene3D" id="2.40.50.100">
    <property type="match status" value="1"/>
</dbReference>
<dbReference type="HAMAP" id="MF_00539">
    <property type="entry name" value="Ribosomal_bL27"/>
    <property type="match status" value="1"/>
</dbReference>
<dbReference type="InterPro" id="IPR001684">
    <property type="entry name" value="Ribosomal_bL27"/>
</dbReference>
<dbReference type="InterPro" id="IPR018261">
    <property type="entry name" value="Ribosomal_bL27_CS"/>
</dbReference>
<dbReference type="NCBIfam" id="TIGR00062">
    <property type="entry name" value="L27"/>
    <property type="match status" value="1"/>
</dbReference>
<dbReference type="PANTHER" id="PTHR15893:SF0">
    <property type="entry name" value="LARGE RIBOSOMAL SUBUNIT PROTEIN BL27M"/>
    <property type="match status" value="1"/>
</dbReference>
<dbReference type="PANTHER" id="PTHR15893">
    <property type="entry name" value="RIBOSOMAL PROTEIN L27"/>
    <property type="match status" value="1"/>
</dbReference>
<dbReference type="Pfam" id="PF01016">
    <property type="entry name" value="Ribosomal_L27"/>
    <property type="match status" value="1"/>
</dbReference>
<dbReference type="PRINTS" id="PR00063">
    <property type="entry name" value="RIBOSOMALL27"/>
</dbReference>
<dbReference type="SUPFAM" id="SSF110324">
    <property type="entry name" value="Ribosomal L27 protein-like"/>
    <property type="match status" value="1"/>
</dbReference>
<dbReference type="PROSITE" id="PS00831">
    <property type="entry name" value="RIBOSOMAL_L27"/>
    <property type="match status" value="1"/>
</dbReference>
<accession>B0BV44</accession>
<feature type="chain" id="PRO_1000081904" description="Large ribosomal subunit protein bL27">
    <location>
        <begin position="1"/>
        <end position="86"/>
    </location>
</feature>
<feature type="region of interest" description="Disordered" evidence="2">
    <location>
        <begin position="1"/>
        <end position="22"/>
    </location>
</feature>
<gene>
    <name evidence="1" type="primary">rpmA</name>
    <name type="ordered locus">RrIowa_1370</name>
</gene>
<sequence length="86" mass="9323">MATKKAGGSSRNGRDSAGRRLGVKKADGQYVIPGNIIVRQRGTKIHPGMNVGLGKDHTIFALIEGRVEFLTKRNHKIVNVKEIAST</sequence>
<keyword id="KW-0687">Ribonucleoprotein</keyword>
<keyword id="KW-0689">Ribosomal protein</keyword>